<comment type="function">
    <text evidence="6">Plant-specific actin binding protein. May be part of a membrane-cytoskeletal adapter complex.</text>
</comment>
<comment type="similarity">
    <text evidence="5">Belongs to the NET family.</text>
</comment>
<comment type="sequence caution" evidence="5">
    <conflict type="erroneous gene model prediction">
        <sequence resource="EMBL-CDS" id="AAB63087"/>
    </conflict>
</comment>
<name>NET4B_ARATH</name>
<evidence type="ECO:0000255" key="1"/>
<evidence type="ECO:0000255" key="2">
    <source>
        <dbReference type="PROSITE-ProRule" id="PRU01110"/>
    </source>
</evidence>
<evidence type="ECO:0000256" key="3">
    <source>
        <dbReference type="SAM" id="MobiDB-lite"/>
    </source>
</evidence>
<evidence type="ECO:0000303" key="4">
    <source>
    </source>
</evidence>
<evidence type="ECO:0000305" key="5"/>
<evidence type="ECO:0000305" key="6">
    <source>
    </source>
</evidence>
<evidence type="ECO:0000312" key="7">
    <source>
        <dbReference type="Araport" id="AT2G30500"/>
    </source>
</evidence>
<evidence type="ECO:0000312" key="8">
    <source>
        <dbReference type="EMBL" id="AAB63087.1"/>
    </source>
</evidence>
<evidence type="ECO:0000312" key="9">
    <source>
        <dbReference type="EMBL" id="AAO42872.1"/>
    </source>
</evidence>
<feature type="chain" id="PRO_0000431861" description="Protein NETWORKED 4B">
    <location>
        <begin position="1"/>
        <end position="517"/>
    </location>
</feature>
<feature type="domain" description="NAB" evidence="2">
    <location>
        <begin position="21"/>
        <end position="101"/>
    </location>
</feature>
<feature type="region of interest" description="Disordered" evidence="3">
    <location>
        <begin position="1"/>
        <end position="29"/>
    </location>
</feature>
<feature type="region of interest" description="Disordered" evidence="3">
    <location>
        <begin position="101"/>
        <end position="159"/>
    </location>
</feature>
<feature type="coiled-coil region" evidence="1">
    <location>
        <begin position="156"/>
        <end position="486"/>
    </location>
</feature>
<feature type="compositionally biased region" description="Basic residues" evidence="3">
    <location>
        <begin position="10"/>
        <end position="21"/>
    </location>
</feature>
<feature type="compositionally biased region" description="Low complexity" evidence="3">
    <location>
        <begin position="107"/>
        <end position="119"/>
    </location>
</feature>
<feature type="compositionally biased region" description="Basic and acidic residues" evidence="3">
    <location>
        <begin position="121"/>
        <end position="135"/>
    </location>
</feature>
<proteinExistence type="evidence at transcript level"/>
<dbReference type="EMBL" id="U93215">
    <property type="protein sequence ID" value="AAB63087.1"/>
    <property type="status" value="ALT_SEQ"/>
    <property type="molecule type" value="Genomic_DNA"/>
</dbReference>
<dbReference type="EMBL" id="CP002685">
    <property type="protein sequence ID" value="AEC08398.1"/>
    <property type="molecule type" value="Genomic_DNA"/>
</dbReference>
<dbReference type="EMBL" id="CP002685">
    <property type="protein sequence ID" value="AEC08399.1"/>
    <property type="molecule type" value="Genomic_DNA"/>
</dbReference>
<dbReference type="EMBL" id="BT004626">
    <property type="protein sequence ID" value="AAO42872.1"/>
    <property type="molecule type" value="mRNA"/>
</dbReference>
<dbReference type="EMBL" id="AK227505">
    <property type="protein sequence ID" value="BAE99505.1"/>
    <property type="molecule type" value="mRNA"/>
</dbReference>
<dbReference type="PIR" id="B84709">
    <property type="entry name" value="B84709"/>
</dbReference>
<dbReference type="RefSeq" id="NP_001189641.1">
    <property type="nucleotide sequence ID" value="NM_001202712.2"/>
</dbReference>
<dbReference type="RefSeq" id="NP_001324131.1">
    <property type="nucleotide sequence ID" value="NM_001336272.1"/>
</dbReference>
<dbReference type="RefSeq" id="NP_180608.2">
    <property type="nucleotide sequence ID" value="NM_128602.5"/>
</dbReference>
<dbReference type="SMR" id="Q84VY2"/>
<dbReference type="FunCoup" id="Q84VY2">
    <property type="interactions" value="148"/>
</dbReference>
<dbReference type="STRING" id="3702.Q84VY2"/>
<dbReference type="iPTMnet" id="Q84VY2"/>
<dbReference type="PaxDb" id="3702-AT2G30500.2"/>
<dbReference type="ProteomicsDB" id="249045"/>
<dbReference type="EnsemblPlants" id="AT2G30500.1">
    <property type="protein sequence ID" value="AT2G30500.1"/>
    <property type="gene ID" value="AT2G30500"/>
</dbReference>
<dbReference type="EnsemblPlants" id="AT2G30500.2">
    <property type="protein sequence ID" value="AT2G30500.2"/>
    <property type="gene ID" value="AT2G30500"/>
</dbReference>
<dbReference type="GeneID" id="817600"/>
<dbReference type="Gramene" id="AT2G30500.1">
    <property type="protein sequence ID" value="AT2G30500.1"/>
    <property type="gene ID" value="AT2G30500"/>
</dbReference>
<dbReference type="Gramene" id="AT2G30500.2">
    <property type="protein sequence ID" value="AT2G30500.2"/>
    <property type="gene ID" value="AT2G30500"/>
</dbReference>
<dbReference type="KEGG" id="ath:AT2G30500"/>
<dbReference type="Araport" id="AT2G30500"/>
<dbReference type="TAIR" id="AT2G30500">
    <property type="gene designation" value="NET4B"/>
</dbReference>
<dbReference type="eggNOG" id="ENOG502QQTB">
    <property type="taxonomic scope" value="Eukaryota"/>
</dbReference>
<dbReference type="HOGENOM" id="CLU_032761_0_0_1"/>
<dbReference type="InParanoid" id="Q84VY2"/>
<dbReference type="OMA" id="QICLEER"/>
<dbReference type="PhylomeDB" id="Q84VY2"/>
<dbReference type="PRO" id="PR:Q84VY2"/>
<dbReference type="Proteomes" id="UP000006548">
    <property type="component" value="Chromosome 2"/>
</dbReference>
<dbReference type="ExpressionAtlas" id="Q84VY2">
    <property type="expression patterns" value="baseline and differential"/>
</dbReference>
<dbReference type="GO" id="GO:0016020">
    <property type="term" value="C:membrane"/>
    <property type="evidence" value="ECO:0007669"/>
    <property type="project" value="UniProtKB-ARBA"/>
</dbReference>
<dbReference type="GO" id="GO:0003779">
    <property type="term" value="F:actin binding"/>
    <property type="evidence" value="ECO:0007669"/>
    <property type="project" value="InterPro"/>
</dbReference>
<dbReference type="Gene3D" id="1.10.287.1490">
    <property type="match status" value="1"/>
</dbReference>
<dbReference type="InterPro" id="IPR011684">
    <property type="entry name" value="NAB"/>
</dbReference>
<dbReference type="InterPro" id="IPR051861">
    <property type="entry name" value="NET_actin-binding_domain"/>
</dbReference>
<dbReference type="PANTHER" id="PTHR32258:SF28">
    <property type="entry name" value="PROTEIN NETWORKED 3A-RELATED"/>
    <property type="match status" value="1"/>
</dbReference>
<dbReference type="PANTHER" id="PTHR32258">
    <property type="entry name" value="PROTEIN NETWORKED 4A"/>
    <property type="match status" value="1"/>
</dbReference>
<dbReference type="Pfam" id="PF07765">
    <property type="entry name" value="KIP1"/>
    <property type="match status" value="1"/>
</dbReference>
<dbReference type="PROSITE" id="PS51774">
    <property type="entry name" value="NAB"/>
    <property type="match status" value="1"/>
</dbReference>
<protein>
    <recommendedName>
        <fullName evidence="4">Protein NETWORKED 4B</fullName>
    </recommendedName>
</protein>
<organism evidence="9">
    <name type="scientific">Arabidopsis thaliana</name>
    <name type="common">Mouse-ear cress</name>
    <dbReference type="NCBI Taxonomy" id="3702"/>
    <lineage>
        <taxon>Eukaryota</taxon>
        <taxon>Viridiplantae</taxon>
        <taxon>Streptophyta</taxon>
        <taxon>Embryophyta</taxon>
        <taxon>Tracheophyta</taxon>
        <taxon>Spermatophyta</taxon>
        <taxon>Magnoliopsida</taxon>
        <taxon>eudicotyledons</taxon>
        <taxon>Gunneridae</taxon>
        <taxon>Pentapetalae</taxon>
        <taxon>rosids</taxon>
        <taxon>malvids</taxon>
        <taxon>Brassicales</taxon>
        <taxon>Brassicaceae</taxon>
        <taxon>Camelineae</taxon>
        <taxon>Arabidopsis</taxon>
    </lineage>
</organism>
<keyword id="KW-0175">Coiled coil</keyword>
<keyword id="KW-1185">Reference proteome</keyword>
<sequence>MASSTAQSKKQFKRSMTKKSHSWWWDSHNCPKNSKWLAENLEKMDDRVNHMLKLIEEDADSFAKKAQMYFQKRPELIQLVEEFYRMYRALAERYDQASGELQKNHTSEIQSQSSLEISSPTKEKLSRRQSSHKEEEDSSSLTDSGSDSDHSSANDEDGDEALIRRMAELELELQETKQKLLLQQESVDGDNNVDLLHKITTYEGELKEANEKMRMHEDEIANLKNQLQSFMSFDTEDHLGAEQKSVDLDKEDTKEDAVATKVLALEEELSIAKEKLQHFEKETYSLKNELEIGKAAEEKLKSLQHELELAQRDADTYINKLNAEKKEVLKLQERLAMVKTSLQDRDNEIRALKTAVSDAEQKIFPEKAQIKGEMSKMLEERSQLGEQLRELESHIRLIKEEKAETEEKLRGGTEKISGMRDESNVLREEIGKREEKIKETEKHMEELHMEQVRLRRRSSELTEEVERTRVSASEMAEQKREAIRQLCMSLDHYRDGYDRLWRVVAGHKSKRVVVLST</sequence>
<accession>Q84VY2</accession>
<accession>O04345</accession>
<gene>
    <name evidence="4" type="primary">NET4B</name>
    <name evidence="7" type="ordered locus">At2g30500</name>
    <name evidence="8" type="ORF">T6B20.15</name>
</gene>
<reference key="1">
    <citation type="journal article" date="1999" name="Nature">
        <title>Sequence and analysis of chromosome 2 of the plant Arabidopsis thaliana.</title>
        <authorList>
            <person name="Lin X."/>
            <person name="Kaul S."/>
            <person name="Rounsley S.D."/>
            <person name="Shea T.P."/>
            <person name="Benito M.-I."/>
            <person name="Town C.D."/>
            <person name="Fujii C.Y."/>
            <person name="Mason T.M."/>
            <person name="Bowman C.L."/>
            <person name="Barnstead M.E."/>
            <person name="Feldblyum T.V."/>
            <person name="Buell C.R."/>
            <person name="Ketchum K.A."/>
            <person name="Lee J.J."/>
            <person name="Ronning C.M."/>
            <person name="Koo H.L."/>
            <person name="Moffat K.S."/>
            <person name="Cronin L.A."/>
            <person name="Shen M."/>
            <person name="Pai G."/>
            <person name="Van Aken S."/>
            <person name="Umayam L."/>
            <person name="Tallon L.J."/>
            <person name="Gill J.E."/>
            <person name="Adams M.D."/>
            <person name="Carrera A.J."/>
            <person name="Creasy T.H."/>
            <person name="Goodman H.M."/>
            <person name="Somerville C.R."/>
            <person name="Copenhaver G.P."/>
            <person name="Preuss D."/>
            <person name="Nierman W.C."/>
            <person name="White O."/>
            <person name="Eisen J.A."/>
            <person name="Salzberg S.L."/>
            <person name="Fraser C.M."/>
            <person name="Venter J.C."/>
        </authorList>
    </citation>
    <scope>NUCLEOTIDE SEQUENCE [LARGE SCALE GENOMIC DNA]</scope>
    <source>
        <strain>cv. Columbia</strain>
    </source>
</reference>
<reference key="2">
    <citation type="journal article" date="2017" name="Plant J.">
        <title>Araport11: a complete reannotation of the Arabidopsis thaliana reference genome.</title>
        <authorList>
            <person name="Cheng C.Y."/>
            <person name="Krishnakumar V."/>
            <person name="Chan A.P."/>
            <person name="Thibaud-Nissen F."/>
            <person name="Schobel S."/>
            <person name="Town C.D."/>
        </authorList>
    </citation>
    <scope>GENOME REANNOTATION</scope>
    <source>
        <strain>cv. Columbia</strain>
    </source>
</reference>
<reference key="3">
    <citation type="journal article" date="2003" name="Science">
        <title>Empirical analysis of transcriptional activity in the Arabidopsis genome.</title>
        <authorList>
            <person name="Yamada K."/>
            <person name="Lim J."/>
            <person name="Dale J.M."/>
            <person name="Chen H."/>
            <person name="Shinn P."/>
            <person name="Palm C.J."/>
            <person name="Southwick A.M."/>
            <person name="Wu H.C."/>
            <person name="Kim C.J."/>
            <person name="Nguyen M."/>
            <person name="Pham P.K."/>
            <person name="Cheuk R.F."/>
            <person name="Karlin-Newmann G."/>
            <person name="Liu S.X."/>
            <person name="Lam B."/>
            <person name="Sakano H."/>
            <person name="Wu T."/>
            <person name="Yu G."/>
            <person name="Miranda M."/>
            <person name="Quach H.L."/>
            <person name="Tripp M."/>
            <person name="Chang C.H."/>
            <person name="Lee J.M."/>
            <person name="Toriumi M.J."/>
            <person name="Chan M.M."/>
            <person name="Tang C.C."/>
            <person name="Onodera C.S."/>
            <person name="Deng J.M."/>
            <person name="Akiyama K."/>
            <person name="Ansari Y."/>
            <person name="Arakawa T."/>
            <person name="Banh J."/>
            <person name="Banno F."/>
            <person name="Bowser L."/>
            <person name="Brooks S.Y."/>
            <person name="Carninci P."/>
            <person name="Chao Q."/>
            <person name="Choy N."/>
            <person name="Enju A."/>
            <person name="Goldsmith A.D."/>
            <person name="Gurjal M."/>
            <person name="Hansen N.F."/>
            <person name="Hayashizaki Y."/>
            <person name="Johnson-Hopson C."/>
            <person name="Hsuan V.W."/>
            <person name="Iida K."/>
            <person name="Karnes M."/>
            <person name="Khan S."/>
            <person name="Koesema E."/>
            <person name="Ishida J."/>
            <person name="Jiang P.X."/>
            <person name="Jones T."/>
            <person name="Kawai J."/>
            <person name="Kamiya A."/>
            <person name="Meyers C."/>
            <person name="Nakajima M."/>
            <person name="Narusaka M."/>
            <person name="Seki M."/>
            <person name="Sakurai T."/>
            <person name="Satou M."/>
            <person name="Tamse R."/>
            <person name="Vaysberg M."/>
            <person name="Wallender E.K."/>
            <person name="Wong C."/>
            <person name="Yamamura Y."/>
            <person name="Yuan S."/>
            <person name="Shinozaki K."/>
            <person name="Davis R.W."/>
            <person name="Theologis A."/>
            <person name="Ecker J.R."/>
        </authorList>
    </citation>
    <scope>NUCLEOTIDE SEQUENCE [LARGE SCALE MRNA]</scope>
    <source>
        <strain>cv. Columbia</strain>
    </source>
</reference>
<reference key="4">
    <citation type="submission" date="2006-07" db="EMBL/GenBank/DDBJ databases">
        <title>Large-scale analysis of RIKEN Arabidopsis full-length (RAFL) cDNAs.</title>
        <authorList>
            <person name="Totoki Y."/>
            <person name="Seki M."/>
            <person name="Ishida J."/>
            <person name="Nakajima M."/>
            <person name="Enju A."/>
            <person name="Kamiya A."/>
            <person name="Narusaka M."/>
            <person name="Shin-i T."/>
            <person name="Nakagawa M."/>
            <person name="Sakamoto N."/>
            <person name="Oishi K."/>
            <person name="Kohara Y."/>
            <person name="Kobayashi M."/>
            <person name="Toyoda A."/>
            <person name="Sakaki Y."/>
            <person name="Sakurai T."/>
            <person name="Iida K."/>
            <person name="Akiyama K."/>
            <person name="Satou M."/>
            <person name="Toyoda T."/>
            <person name="Konagaya A."/>
            <person name="Carninci P."/>
            <person name="Kawai J."/>
            <person name="Hayashizaki Y."/>
            <person name="Shinozaki K."/>
        </authorList>
    </citation>
    <scope>NUCLEOTIDE SEQUENCE [LARGE SCALE MRNA]</scope>
    <source>
        <strain>cv. Columbia</strain>
    </source>
</reference>
<reference key="5">
    <citation type="journal article" date="2012" name="Curr. Biol.">
        <title>A superfamily of actin-binding proteins at the actin-membrane nexus of higher plants.</title>
        <authorList>
            <person name="Deeks M.J."/>
            <person name="Calcutt J.R."/>
            <person name="Ingle E.K."/>
            <person name="Hawkins T.J."/>
            <person name="Chapman S."/>
            <person name="Richardson A.C."/>
            <person name="Mentlak D.A."/>
            <person name="Dixon M.R."/>
            <person name="Cartwright F."/>
            <person name="Smertenko A.P."/>
            <person name="Oparka K."/>
            <person name="Hussey P.J."/>
        </authorList>
    </citation>
    <scope>GENE FAMILY</scope>
    <scope>NOMENCLATURE</scope>
</reference>
<reference key="6">
    <citation type="journal article" date="2014" name="Front. Plant Sci.">
        <title>The evolution of the actin binding NET superfamily.</title>
        <authorList>
            <person name="Hawkins T.J."/>
            <person name="Deeks M.J."/>
            <person name="Wang P."/>
            <person name="Hussey P.J."/>
        </authorList>
    </citation>
    <scope>GENE FAMILY</scope>
</reference>